<proteinExistence type="evidence at protein level"/>
<accession>P35974</accession>
<reference key="1">
    <citation type="journal article" date="1993" name="Virus Genes">
        <title>Molecular cloning and complete nucleotide sequence of genomic RNA of the AIK-C strain of attenuated measles virus.</title>
        <authorList>
            <person name="Mori T."/>
            <person name="Sasaki K."/>
            <person name="Hashimoto H."/>
            <person name="Makino S."/>
        </authorList>
    </citation>
    <scope>NUCLEOTIDE SEQUENCE [GENOMIC RNA]</scope>
</reference>
<reference key="2">
    <citation type="journal article" date="2001" name="J. Virol.">
        <title>Comparison of predicted amino acid sequences of measles virus strains in the Edmonston vaccine lineage.</title>
        <authorList>
            <person name="Parks C.L."/>
            <person name="Lerch R.A."/>
            <person name="Walpita P."/>
            <person name="Wang H.P."/>
            <person name="Sidhu M.S."/>
            <person name="Udem S.A."/>
        </authorList>
    </citation>
    <scope>RNA EDITING</scope>
</reference>
<name>PHOSP_MEASA</name>
<evidence type="ECO:0000250" key="1">
    <source>
        <dbReference type="UniProtKB" id="P04859"/>
    </source>
</evidence>
<evidence type="ECO:0000250" key="2">
    <source>
        <dbReference type="UniProtKB" id="P06162"/>
    </source>
</evidence>
<evidence type="ECO:0000250" key="3">
    <source>
        <dbReference type="UniProtKB" id="Q77M42"/>
    </source>
</evidence>
<evidence type="ECO:0000250" key="4">
    <source>
        <dbReference type="UniProtKB" id="Q83623"/>
    </source>
</evidence>
<evidence type="ECO:0000250" key="5">
    <source>
        <dbReference type="UniProtKB" id="Q9WMB4"/>
    </source>
</evidence>
<evidence type="ECO:0000256" key="6">
    <source>
        <dbReference type="SAM" id="MobiDB-lite"/>
    </source>
</evidence>
<evidence type="ECO:0000269" key="7">
    <source>
    </source>
</evidence>
<evidence type="ECO:0000305" key="8"/>
<evidence type="ECO:0007829" key="9">
    <source>
        <dbReference type="PDB" id="4BHV"/>
    </source>
</evidence>
<organism>
    <name type="scientific">Measles virus (strain Edmonston-AIK-C vaccine)</name>
    <name type="common">MeV</name>
    <name type="synonym">Subacute sclerose panencephalitis virus</name>
    <dbReference type="NCBI Taxonomy" id="36408"/>
    <lineage>
        <taxon>Viruses</taxon>
        <taxon>Riboviria</taxon>
        <taxon>Orthornavirae</taxon>
        <taxon>Negarnaviricota</taxon>
        <taxon>Haploviricotina</taxon>
        <taxon>Monjiviricetes</taxon>
        <taxon>Mononegavirales</taxon>
        <taxon>Paramyxoviridae</taxon>
        <taxon>Orthoparamyxovirinae</taxon>
        <taxon>Morbillivirus</taxon>
        <taxon>Morbillivirus hominis</taxon>
        <taxon>Measles morbillivirus</taxon>
    </lineage>
</organism>
<gene>
    <name type="primary">P/V</name>
</gene>
<keyword id="KW-0002">3D-structure</keyword>
<keyword id="KW-0597">Phosphoprotein</keyword>
<keyword id="KW-0691">RNA editing</keyword>
<keyword id="KW-0693">Viral RNA replication</keyword>
<comment type="function">
    <text evidence="2 3">Essential cofactor of the RNA polymerase L that plays a central role in the transcription and replication by forming the polymerase complex with RNA polymerase L and recruiting L to the genomic N-RNA template for RNA synthesis (By similarity). Also plays a central role in the encapsidation of nascent RNA chains by forming the encapsidation complex with the nucleocapsid protein N (N-P complex). Acts as a chaperone for newly synthesized free N protein, so-called N0, allowing encapsidation of nascent RNA chains during replication (By similarity). The nucleoprotein protein N prevents excessive phosphorylation of P, which leads to down-regulation of viral transcription/ replication. Participates, together with N, in the formation of viral factories (viroplasms), which are large inclusions in the host cytoplasm where replication takes place (By similarity).</text>
</comment>
<comment type="subunit">
    <text evidence="3 4 5">Homotetramer (By similarity). Interacts (via multimerization domain and XD domain) with polymerase L; this interaction forms the polymerase L-P complex (By similarity). Interacts (via N-terminus) with N0 (via Ncore); this interaction allows P to chaperon N0 to avoid N polymerization and non-specific RNA binding before encapsidation (By similarity). Interacts (via C-terminus) with N-RNA template (via Ntail); this interaction maintains the P/L complex anchored to the nucleocapsid template during the sequential transcription (By similarity). Interacts (via C-terminus) with protein C this interaction allows C to associate with the ribonucleocapsid (By similarity).</text>
</comment>
<comment type="domain">
    <text evidence="1 2 3 4">The N-terminus consists of a long intrinsically disordered tail. The central part contains the coiled-coil multimerization domain (MD) (By similarity). Forms a four-stranded coiled coil structure (By similarity). The C-terminus constitutes the alpha-helical domain (XD) that binds to the nucleocapsid (N-RNA complex) (By similarity).</text>
</comment>
<comment type="PTM">
    <text evidence="3">Phosphorylation on serines by host CK2 is necessary for the formation of viral factories.</text>
</comment>
<comment type="RNA editing">
    <location>
        <position position="231" evidence="7"/>
    </location>
    <text>Partially edited. RNA editing at this position consists of an insertion of one guanine nucleotide. The sequence displayed here is the P protein, derived from the unedited RNA. The edited RNA gives rise to the V protein (AC Q9IC37).</text>
</comment>
<comment type="similarity">
    <text evidence="8">Belongs to the morbillivirus P protein family.</text>
</comment>
<protein>
    <recommendedName>
        <fullName>Phosphoprotein</fullName>
        <shortName>Protein P</shortName>
    </recommendedName>
</protein>
<dbReference type="EMBL" id="S58435">
    <property type="protein sequence ID" value="AAB26142.1"/>
    <property type="molecule type" value="Genomic_RNA"/>
</dbReference>
<dbReference type="PIR" id="B48556">
    <property type="entry name" value="B48556"/>
</dbReference>
<dbReference type="PDB" id="4BHV">
    <property type="method" value="X-ray"/>
    <property type="resolution" value="2.10 A"/>
    <property type="chains" value="A/B/C/D=304-360"/>
</dbReference>
<dbReference type="PDB" id="4C5Q">
    <property type="method" value="X-ray"/>
    <property type="resolution" value="2.20 A"/>
    <property type="chains" value="A/B/C/D/E/F/G/H=304-375"/>
</dbReference>
<dbReference type="PDBsum" id="4BHV"/>
<dbReference type="PDBsum" id="4C5Q"/>
<dbReference type="BMRB" id="P35974"/>
<dbReference type="SMR" id="P35974"/>
<dbReference type="CD-CODE" id="097E35FD">
    <property type="entry name" value="Synthetic Condensate 000345"/>
</dbReference>
<dbReference type="CD-CODE" id="54D84D15">
    <property type="entry name" value="Viral factory"/>
</dbReference>
<dbReference type="EvolutionaryTrace" id="P35974"/>
<dbReference type="Proteomes" id="UP000007775">
    <property type="component" value="Genome"/>
</dbReference>
<dbReference type="GO" id="GO:0003723">
    <property type="term" value="F:RNA binding"/>
    <property type="evidence" value="ECO:0007669"/>
    <property type="project" value="InterPro"/>
</dbReference>
<dbReference type="GO" id="GO:0003968">
    <property type="term" value="F:RNA-directed RNA polymerase activity"/>
    <property type="evidence" value="ECO:0007669"/>
    <property type="project" value="InterPro"/>
</dbReference>
<dbReference type="GO" id="GO:0006351">
    <property type="term" value="P:DNA-templated transcription"/>
    <property type="evidence" value="ECO:0007669"/>
    <property type="project" value="InterPro"/>
</dbReference>
<dbReference type="GO" id="GO:0019079">
    <property type="term" value="P:viral genome replication"/>
    <property type="evidence" value="ECO:0007669"/>
    <property type="project" value="InterPro"/>
</dbReference>
<dbReference type="CDD" id="cd21031">
    <property type="entry name" value="MEV_P-protein-C_like"/>
    <property type="match status" value="1"/>
</dbReference>
<dbReference type="Gene3D" id="1.20.5.110">
    <property type="match status" value="1"/>
</dbReference>
<dbReference type="Gene3D" id="1.10.8.10">
    <property type="entry name" value="DNA helicase RuvA subunit, C-terminal domain"/>
    <property type="match status" value="1"/>
</dbReference>
<dbReference type="InterPro" id="IPR004897">
    <property type="entry name" value="P/V_Pprotein_paramyxoviral"/>
</dbReference>
<dbReference type="InterPro" id="IPR028243">
    <property type="entry name" value="Paramyxo_P/V_N"/>
</dbReference>
<dbReference type="InterPro" id="IPR016075">
    <property type="entry name" value="RNA_pol_Pprot-P_XD_paramyxovir"/>
</dbReference>
<dbReference type="Pfam" id="PF03210">
    <property type="entry name" value="Paramyx_P_V_C"/>
    <property type="match status" value="1"/>
</dbReference>
<dbReference type="Pfam" id="PF13825">
    <property type="entry name" value="Paramyxo_P_V_N"/>
    <property type="match status" value="1"/>
</dbReference>
<dbReference type="SUPFAM" id="SSF101089">
    <property type="entry name" value="Phosphoprotein XD domain"/>
    <property type="match status" value="1"/>
</dbReference>
<organismHost>
    <name type="scientific">Homo sapiens</name>
    <name type="common">Human</name>
    <dbReference type="NCBI Taxonomy" id="9606"/>
</organismHost>
<feature type="chain" id="PRO_0000142689" description="Phosphoprotein">
    <location>
        <begin position="1"/>
        <end position="507"/>
    </location>
</feature>
<feature type="region of interest" description="Interaction with N0" evidence="3">
    <location>
        <begin position="1"/>
        <end position="48"/>
    </location>
</feature>
<feature type="region of interest" description="Disordered" evidence="6">
    <location>
        <begin position="41"/>
        <end position="99"/>
    </location>
</feature>
<feature type="region of interest" description="Disordered" evidence="6">
    <location>
        <begin position="134"/>
        <end position="163"/>
    </location>
</feature>
<feature type="region of interest" description="Disordered" evidence="6">
    <location>
        <begin position="201"/>
        <end position="231"/>
    </location>
</feature>
<feature type="region of interest" description="Disordered" evidence="6">
    <location>
        <begin position="250"/>
        <end position="273"/>
    </location>
</feature>
<feature type="region of interest" description="Multimerization" evidence="3">
    <location>
        <begin position="304"/>
        <end position="376"/>
    </location>
</feature>
<feature type="region of interest" description="Interaction with the L polymerase" evidence="5">
    <location>
        <begin position="361"/>
        <end position="377"/>
    </location>
</feature>
<feature type="region of interest" description="Interaction with the L polymerase" evidence="5">
    <location>
        <begin position="396"/>
        <end position="410"/>
    </location>
</feature>
<feature type="region of interest" description="X domain (XD)" evidence="5">
    <location>
        <begin position="457"/>
        <end position="507"/>
    </location>
</feature>
<feature type="region of interest" description="Interaction with the nucleocapsid (N-RNA)" evidence="3">
    <location>
        <begin position="459"/>
        <end position="507"/>
    </location>
</feature>
<feature type="compositionally biased region" description="Low complexity" evidence="6">
    <location>
        <begin position="134"/>
        <end position="145"/>
    </location>
</feature>
<feature type="compositionally biased region" description="Acidic residues" evidence="6">
    <location>
        <begin position="146"/>
        <end position="160"/>
    </location>
</feature>
<feature type="compositionally biased region" description="Low complexity" evidence="6">
    <location>
        <begin position="260"/>
        <end position="270"/>
    </location>
</feature>
<feature type="modified residue" description="Phosphoserine" evidence="3">
    <location>
        <position position="86"/>
    </location>
</feature>
<feature type="modified residue" description="Phosphoserine" evidence="3">
    <location>
        <position position="151"/>
    </location>
</feature>
<feature type="helix" evidence="9">
    <location>
        <begin position="309"/>
        <end position="340"/>
    </location>
</feature>
<feature type="helix" evidence="9">
    <location>
        <begin position="342"/>
        <end position="360"/>
    </location>
</feature>
<sequence>MAEEQARHVKNGLECIRALKAEPIGSLAIEEAMAAWSEISDNPGQERATCREEKAGSSGLSKPCLSAIGSTEGGAPRIRGQGPGESDDDAETLGIPPRNLQASSTGLQCYYVYDHSGEAVKGIQDADSIMVQSGLDGDSTLSGGDNESENSDVDIGEPDTEGYAITDRGSAPISMGFRASDVETAEGGEIHELLRLQSRGNNFPKLGKTLNVPPPPDPGRASTSGTPIKKGTERRLASFGTEIASLLTGGATQCARKSPSEPSGPGAPAGNVPEYVSNAALIQEWTPESGTTISPRSQNNEEGGDYYDDELFSDVQDIKTALAKIHEDNQKIISKLESLLLLKGEVESIKKQINRQNISISTLEGHLSSIMIAIPGLGKDPNDPTADVEINPDLKPIIGRDSGRALAEVLKKPVASRQLQGMTNGRTSSRGQLLKEFQPKPIGKKMSSAVGFVPDTGPASRSVIRSIIKSSRLEEDRKRYLMTLLDDIKGANDLAKFHQMLMKIIMK</sequence>